<sequence length="413" mass="46066">MKSYLVGGAVRDALLGLPVKDRDWVVVGATPQQMLDAGYQQVGRDFPVFLHPQSREEYALARTERKSGAGYTGFTCYAAPDVTLEADLLRRDLTVNALAQDADGTIIDPYGGQNDLRLRLLRHVSPAFSEDPLRVLRVARFAARYAHLGFRIAEETQALMHAMVEAGELAHLTPERVWKETESALTTRNPQVFFQTLRDCQALKVLFPEIDALYGVPAPAKWHPEIDTGLHTLMTVTMAAMLSPDVDVRFATLCHDLGKGLTPKALWPRHHGHGPAGVKLVEQLCARLRVPNDIRDLAKLVAEYHDLIHTLPILQPKTLVKLFDSIDAWRKPQRVQQIALTSEADVRGRTGFEASDYPQGRLLLEAWEVAQSVSTKEVVAAGFKGAQIREELTRRRIAAVAQWKEQRCPQPQG</sequence>
<accession>B5XU35</accession>
<reference key="1">
    <citation type="journal article" date="2008" name="PLoS Genet.">
        <title>Complete genome sequence of the N2-fixing broad host range endophyte Klebsiella pneumoniae 342 and virulence predictions verified in mice.</title>
        <authorList>
            <person name="Fouts D.E."/>
            <person name="Tyler H.L."/>
            <person name="DeBoy R.T."/>
            <person name="Daugherty S."/>
            <person name="Ren Q."/>
            <person name="Badger J.H."/>
            <person name="Durkin A.S."/>
            <person name="Huot H."/>
            <person name="Shrivastava S."/>
            <person name="Kothari S."/>
            <person name="Dodson R.J."/>
            <person name="Mohamoud Y."/>
            <person name="Khouri H."/>
            <person name="Roesch L.F.W."/>
            <person name="Krogfelt K.A."/>
            <person name="Struve C."/>
            <person name="Triplett E.W."/>
            <person name="Methe B.A."/>
        </authorList>
    </citation>
    <scope>NUCLEOTIDE SEQUENCE [LARGE SCALE GENOMIC DNA]</scope>
    <source>
        <strain>342</strain>
    </source>
</reference>
<dbReference type="EC" id="2.7.7.72" evidence="1"/>
<dbReference type="EC" id="3.1.3.-" evidence="1"/>
<dbReference type="EC" id="3.1.4.-" evidence="1"/>
<dbReference type="EMBL" id="CP000964">
    <property type="protein sequence ID" value="ACI11534.1"/>
    <property type="molecule type" value="Genomic_DNA"/>
</dbReference>
<dbReference type="SMR" id="B5XU35"/>
<dbReference type="KEGG" id="kpe:KPK_0660"/>
<dbReference type="HOGENOM" id="CLU_015961_1_1_6"/>
<dbReference type="Proteomes" id="UP000001734">
    <property type="component" value="Chromosome"/>
</dbReference>
<dbReference type="GO" id="GO:0005524">
    <property type="term" value="F:ATP binding"/>
    <property type="evidence" value="ECO:0007669"/>
    <property type="project" value="UniProtKB-UniRule"/>
</dbReference>
<dbReference type="GO" id="GO:0004810">
    <property type="term" value="F:CCA tRNA nucleotidyltransferase activity"/>
    <property type="evidence" value="ECO:0007669"/>
    <property type="project" value="UniProtKB-UniRule"/>
</dbReference>
<dbReference type="GO" id="GO:0004112">
    <property type="term" value="F:cyclic-nucleotide phosphodiesterase activity"/>
    <property type="evidence" value="ECO:0007669"/>
    <property type="project" value="UniProtKB-UniRule"/>
</dbReference>
<dbReference type="GO" id="GO:0000287">
    <property type="term" value="F:magnesium ion binding"/>
    <property type="evidence" value="ECO:0007669"/>
    <property type="project" value="UniProtKB-UniRule"/>
</dbReference>
<dbReference type="GO" id="GO:0016791">
    <property type="term" value="F:phosphatase activity"/>
    <property type="evidence" value="ECO:0007669"/>
    <property type="project" value="UniProtKB-UniRule"/>
</dbReference>
<dbReference type="GO" id="GO:0000049">
    <property type="term" value="F:tRNA binding"/>
    <property type="evidence" value="ECO:0007669"/>
    <property type="project" value="UniProtKB-UniRule"/>
</dbReference>
<dbReference type="GO" id="GO:0042245">
    <property type="term" value="P:RNA repair"/>
    <property type="evidence" value="ECO:0007669"/>
    <property type="project" value="UniProtKB-KW"/>
</dbReference>
<dbReference type="GO" id="GO:0001680">
    <property type="term" value="P:tRNA 3'-terminal CCA addition"/>
    <property type="evidence" value="ECO:0007669"/>
    <property type="project" value="UniProtKB-UniRule"/>
</dbReference>
<dbReference type="CDD" id="cd00077">
    <property type="entry name" value="HDc"/>
    <property type="match status" value="1"/>
</dbReference>
<dbReference type="CDD" id="cd05398">
    <property type="entry name" value="NT_ClassII-CCAase"/>
    <property type="match status" value="1"/>
</dbReference>
<dbReference type="FunFam" id="1.10.3090.10:FF:000001">
    <property type="entry name" value="Multifunctional CCA protein"/>
    <property type="match status" value="1"/>
</dbReference>
<dbReference type="FunFam" id="3.30.460.10:FF:000016">
    <property type="entry name" value="Multifunctional CCA protein"/>
    <property type="match status" value="1"/>
</dbReference>
<dbReference type="Gene3D" id="3.30.460.10">
    <property type="entry name" value="Beta Polymerase, domain 2"/>
    <property type="match status" value="1"/>
</dbReference>
<dbReference type="Gene3D" id="1.10.3090.10">
    <property type="entry name" value="cca-adding enzyme, domain 2"/>
    <property type="match status" value="1"/>
</dbReference>
<dbReference type="HAMAP" id="MF_01261">
    <property type="entry name" value="CCA_bact_type1"/>
    <property type="match status" value="1"/>
</dbReference>
<dbReference type="HAMAP" id="MF_01262">
    <property type="entry name" value="CCA_bact_type2"/>
    <property type="match status" value="1"/>
</dbReference>
<dbReference type="InterPro" id="IPR012006">
    <property type="entry name" value="CCA_bact"/>
</dbReference>
<dbReference type="InterPro" id="IPR003607">
    <property type="entry name" value="HD/PDEase_dom"/>
</dbReference>
<dbReference type="InterPro" id="IPR006674">
    <property type="entry name" value="HD_domain"/>
</dbReference>
<dbReference type="InterPro" id="IPR043519">
    <property type="entry name" value="NT_sf"/>
</dbReference>
<dbReference type="InterPro" id="IPR002646">
    <property type="entry name" value="PolA_pol_head_dom"/>
</dbReference>
<dbReference type="InterPro" id="IPR032828">
    <property type="entry name" value="PolyA_RNA-bd"/>
</dbReference>
<dbReference type="InterPro" id="IPR050124">
    <property type="entry name" value="tRNA_CCA-adding_enzyme"/>
</dbReference>
<dbReference type="NCBIfam" id="NF008137">
    <property type="entry name" value="PRK10885.1"/>
    <property type="match status" value="1"/>
</dbReference>
<dbReference type="PANTHER" id="PTHR47545">
    <property type="entry name" value="MULTIFUNCTIONAL CCA PROTEIN"/>
    <property type="match status" value="1"/>
</dbReference>
<dbReference type="PANTHER" id="PTHR47545:SF1">
    <property type="entry name" value="MULTIFUNCTIONAL CCA PROTEIN"/>
    <property type="match status" value="1"/>
</dbReference>
<dbReference type="Pfam" id="PF01966">
    <property type="entry name" value="HD"/>
    <property type="match status" value="1"/>
</dbReference>
<dbReference type="Pfam" id="PF01743">
    <property type="entry name" value="PolyA_pol"/>
    <property type="match status" value="1"/>
</dbReference>
<dbReference type="Pfam" id="PF12627">
    <property type="entry name" value="PolyA_pol_RNAbd"/>
    <property type="match status" value="1"/>
</dbReference>
<dbReference type="PIRSF" id="PIRSF000813">
    <property type="entry name" value="CCA_bact"/>
    <property type="match status" value="1"/>
</dbReference>
<dbReference type="SUPFAM" id="SSF81301">
    <property type="entry name" value="Nucleotidyltransferase"/>
    <property type="match status" value="1"/>
</dbReference>
<dbReference type="SUPFAM" id="SSF81891">
    <property type="entry name" value="Poly A polymerase C-terminal region-like"/>
    <property type="match status" value="1"/>
</dbReference>
<dbReference type="PROSITE" id="PS51831">
    <property type="entry name" value="HD"/>
    <property type="match status" value="1"/>
</dbReference>
<evidence type="ECO:0000255" key="1">
    <source>
        <dbReference type="HAMAP-Rule" id="MF_01261"/>
    </source>
</evidence>
<name>CCA_KLEP3</name>
<proteinExistence type="inferred from homology"/>
<keyword id="KW-0067">ATP-binding</keyword>
<keyword id="KW-0378">Hydrolase</keyword>
<keyword id="KW-0460">Magnesium</keyword>
<keyword id="KW-0479">Metal-binding</keyword>
<keyword id="KW-0511">Multifunctional enzyme</keyword>
<keyword id="KW-0533">Nickel</keyword>
<keyword id="KW-0547">Nucleotide-binding</keyword>
<keyword id="KW-0548">Nucleotidyltransferase</keyword>
<keyword id="KW-0692">RNA repair</keyword>
<keyword id="KW-0694">RNA-binding</keyword>
<keyword id="KW-0808">Transferase</keyword>
<keyword id="KW-0819">tRNA processing</keyword>
<comment type="function">
    <text evidence="1">Catalyzes the addition and repair of the essential 3'-terminal CCA sequence in tRNAs without using a nucleic acid template. Adds these three nucleotides in the order of C, C, and A to the tRNA nucleotide-73, using CTP and ATP as substrates and producing inorganic pyrophosphate. tRNA 3'-terminal CCA addition is required both for tRNA processing and repair. Also involved in tRNA surveillance by mediating tandem CCA addition to generate a CCACCA at the 3' terminus of unstable tRNAs. While stable tRNAs receive only 3'-terminal CCA, unstable tRNAs are marked with CCACCA and rapidly degraded.</text>
</comment>
<comment type="catalytic activity">
    <reaction evidence="1">
        <text>a tRNA precursor + 2 CTP + ATP = a tRNA with a 3' CCA end + 3 diphosphate</text>
        <dbReference type="Rhea" id="RHEA:14433"/>
        <dbReference type="Rhea" id="RHEA-COMP:10465"/>
        <dbReference type="Rhea" id="RHEA-COMP:10468"/>
        <dbReference type="ChEBI" id="CHEBI:30616"/>
        <dbReference type="ChEBI" id="CHEBI:33019"/>
        <dbReference type="ChEBI" id="CHEBI:37563"/>
        <dbReference type="ChEBI" id="CHEBI:74896"/>
        <dbReference type="ChEBI" id="CHEBI:83071"/>
        <dbReference type="EC" id="2.7.7.72"/>
    </reaction>
</comment>
<comment type="catalytic activity">
    <reaction evidence="1">
        <text>a tRNA with a 3' CCA end + 2 CTP + ATP = a tRNA with a 3' CCACCA end + 3 diphosphate</text>
        <dbReference type="Rhea" id="RHEA:76235"/>
        <dbReference type="Rhea" id="RHEA-COMP:10468"/>
        <dbReference type="Rhea" id="RHEA-COMP:18655"/>
        <dbReference type="ChEBI" id="CHEBI:30616"/>
        <dbReference type="ChEBI" id="CHEBI:33019"/>
        <dbReference type="ChEBI" id="CHEBI:37563"/>
        <dbReference type="ChEBI" id="CHEBI:83071"/>
        <dbReference type="ChEBI" id="CHEBI:195187"/>
    </reaction>
    <physiologicalReaction direction="left-to-right" evidence="1">
        <dbReference type="Rhea" id="RHEA:76236"/>
    </physiologicalReaction>
</comment>
<comment type="cofactor">
    <cofactor evidence="1">
        <name>Mg(2+)</name>
        <dbReference type="ChEBI" id="CHEBI:18420"/>
    </cofactor>
    <text evidence="1">Magnesium is required for nucleotidyltransferase activity.</text>
</comment>
<comment type="cofactor">
    <cofactor evidence="1">
        <name>Ni(2+)</name>
        <dbReference type="ChEBI" id="CHEBI:49786"/>
    </cofactor>
    <text evidence="1">Nickel for phosphatase activity.</text>
</comment>
<comment type="subunit">
    <text evidence="1">Monomer. Can also form homodimers and oligomers.</text>
</comment>
<comment type="domain">
    <text evidence="1">Comprises two domains: an N-terminal domain containing the nucleotidyltransferase activity and a C-terminal HD domain associated with both phosphodiesterase and phosphatase activities.</text>
</comment>
<comment type="miscellaneous">
    <text evidence="1">A single active site specifically recognizes both ATP and CTP and is responsible for their addition.</text>
</comment>
<comment type="similarity">
    <text evidence="1">Belongs to the tRNA nucleotidyltransferase/poly(A) polymerase family. Bacterial CCA-adding enzyme type 1 subfamily.</text>
</comment>
<feature type="chain" id="PRO_1000140040" description="Multifunctional CCA protein">
    <location>
        <begin position="1"/>
        <end position="413"/>
    </location>
</feature>
<feature type="domain" description="HD" evidence="1">
    <location>
        <begin position="228"/>
        <end position="329"/>
    </location>
</feature>
<feature type="binding site" evidence="1">
    <location>
        <position position="8"/>
    </location>
    <ligand>
        <name>ATP</name>
        <dbReference type="ChEBI" id="CHEBI:30616"/>
    </ligand>
</feature>
<feature type="binding site" evidence="1">
    <location>
        <position position="8"/>
    </location>
    <ligand>
        <name>CTP</name>
        <dbReference type="ChEBI" id="CHEBI:37563"/>
    </ligand>
</feature>
<feature type="binding site" evidence="1">
    <location>
        <position position="11"/>
    </location>
    <ligand>
        <name>ATP</name>
        <dbReference type="ChEBI" id="CHEBI:30616"/>
    </ligand>
</feature>
<feature type="binding site" evidence="1">
    <location>
        <position position="11"/>
    </location>
    <ligand>
        <name>CTP</name>
        <dbReference type="ChEBI" id="CHEBI:37563"/>
    </ligand>
</feature>
<feature type="binding site" evidence="1">
    <location>
        <position position="21"/>
    </location>
    <ligand>
        <name>Mg(2+)</name>
        <dbReference type="ChEBI" id="CHEBI:18420"/>
    </ligand>
</feature>
<feature type="binding site" evidence="1">
    <location>
        <position position="23"/>
    </location>
    <ligand>
        <name>Mg(2+)</name>
        <dbReference type="ChEBI" id="CHEBI:18420"/>
    </ligand>
</feature>
<feature type="binding site" evidence="1">
    <location>
        <position position="91"/>
    </location>
    <ligand>
        <name>ATP</name>
        <dbReference type="ChEBI" id="CHEBI:30616"/>
    </ligand>
</feature>
<feature type="binding site" evidence="1">
    <location>
        <position position="91"/>
    </location>
    <ligand>
        <name>CTP</name>
        <dbReference type="ChEBI" id="CHEBI:37563"/>
    </ligand>
</feature>
<feature type="binding site" evidence="1">
    <location>
        <position position="137"/>
    </location>
    <ligand>
        <name>ATP</name>
        <dbReference type="ChEBI" id="CHEBI:30616"/>
    </ligand>
</feature>
<feature type="binding site" evidence="1">
    <location>
        <position position="137"/>
    </location>
    <ligand>
        <name>CTP</name>
        <dbReference type="ChEBI" id="CHEBI:37563"/>
    </ligand>
</feature>
<feature type="binding site" evidence="1">
    <location>
        <position position="140"/>
    </location>
    <ligand>
        <name>ATP</name>
        <dbReference type="ChEBI" id="CHEBI:30616"/>
    </ligand>
</feature>
<feature type="binding site" evidence="1">
    <location>
        <position position="140"/>
    </location>
    <ligand>
        <name>CTP</name>
        <dbReference type="ChEBI" id="CHEBI:37563"/>
    </ligand>
</feature>
<gene>
    <name evidence="1" type="primary">cca</name>
    <name type="ordered locus">KPK_0660</name>
</gene>
<protein>
    <recommendedName>
        <fullName evidence="1">Multifunctional CCA protein</fullName>
    </recommendedName>
    <domain>
        <recommendedName>
            <fullName evidence="1">CCA-adding enzyme</fullName>
            <ecNumber evidence="1">2.7.7.72</ecNumber>
        </recommendedName>
        <alternativeName>
            <fullName evidence="1">CCA tRNA nucleotidyltransferase</fullName>
        </alternativeName>
        <alternativeName>
            <fullName evidence="1">tRNA CCA-pyrophosphorylase</fullName>
        </alternativeName>
        <alternativeName>
            <fullName evidence="1">tRNA adenylyl-/cytidylyl-transferase</fullName>
        </alternativeName>
        <alternativeName>
            <fullName evidence="1">tRNA nucleotidyltransferase</fullName>
        </alternativeName>
        <alternativeName>
            <fullName evidence="1">tRNA-NT</fullName>
        </alternativeName>
    </domain>
    <domain>
        <recommendedName>
            <fullName evidence="1">2'-nucleotidase</fullName>
            <ecNumber evidence="1">3.1.3.-</ecNumber>
        </recommendedName>
    </domain>
    <domain>
        <recommendedName>
            <fullName evidence="1">2',3'-cyclic phosphodiesterase</fullName>
            <ecNumber evidence="1">3.1.4.-</ecNumber>
        </recommendedName>
    </domain>
    <domain>
        <recommendedName>
            <fullName evidence="1">Phosphatase</fullName>
            <ecNumber evidence="1">3.1.3.-</ecNumber>
        </recommendedName>
    </domain>
</protein>
<organism>
    <name type="scientific">Klebsiella pneumoniae (strain 342)</name>
    <dbReference type="NCBI Taxonomy" id="507522"/>
    <lineage>
        <taxon>Bacteria</taxon>
        <taxon>Pseudomonadati</taxon>
        <taxon>Pseudomonadota</taxon>
        <taxon>Gammaproteobacteria</taxon>
        <taxon>Enterobacterales</taxon>
        <taxon>Enterobacteriaceae</taxon>
        <taxon>Klebsiella/Raoultella group</taxon>
        <taxon>Klebsiella</taxon>
        <taxon>Klebsiella pneumoniae complex</taxon>
    </lineage>
</organism>